<organism>
    <name type="scientific">Mus musculus</name>
    <name type="common">Mouse</name>
    <dbReference type="NCBI Taxonomy" id="10090"/>
    <lineage>
        <taxon>Eukaryota</taxon>
        <taxon>Metazoa</taxon>
        <taxon>Chordata</taxon>
        <taxon>Craniata</taxon>
        <taxon>Vertebrata</taxon>
        <taxon>Euteleostomi</taxon>
        <taxon>Mammalia</taxon>
        <taxon>Eutheria</taxon>
        <taxon>Euarchontoglires</taxon>
        <taxon>Glires</taxon>
        <taxon>Rodentia</taxon>
        <taxon>Myomorpha</taxon>
        <taxon>Muroidea</taxon>
        <taxon>Muridae</taxon>
        <taxon>Murinae</taxon>
        <taxon>Mus</taxon>
        <taxon>Mus</taxon>
    </lineage>
</organism>
<name>GTR12_MOUSE</name>
<keyword id="KW-1003">Cell membrane</keyword>
<keyword id="KW-0963">Cytoplasm</keyword>
<keyword id="KW-0325">Glycoprotein</keyword>
<keyword id="KW-0472">Membrane</keyword>
<keyword id="KW-1185">Reference proteome</keyword>
<keyword id="KW-0762">Sugar transport</keyword>
<keyword id="KW-0812">Transmembrane</keyword>
<keyword id="KW-1133">Transmembrane helix</keyword>
<keyword id="KW-0813">Transport</keyword>
<evidence type="ECO:0000250" key="1">
    <source>
        <dbReference type="UniProtKB" id="Q5J316"/>
    </source>
</evidence>
<evidence type="ECO:0000250" key="2">
    <source>
        <dbReference type="UniProtKB" id="Q8TD20"/>
    </source>
</evidence>
<evidence type="ECO:0000255" key="3"/>
<evidence type="ECO:0000256" key="4">
    <source>
        <dbReference type="SAM" id="MobiDB-lite"/>
    </source>
</evidence>
<evidence type="ECO:0000269" key="5">
    <source>
    </source>
</evidence>
<evidence type="ECO:0000269" key="6">
    <source>
    </source>
</evidence>
<evidence type="ECO:0000269" key="7">
    <source>
    </source>
</evidence>
<evidence type="ECO:0000303" key="8">
    <source>
    </source>
</evidence>
<evidence type="ECO:0000305" key="9"/>
<evidence type="ECO:0000305" key="10">
    <source>
    </source>
</evidence>
<evidence type="ECO:0000312" key="11">
    <source>
        <dbReference type="MGI" id="MGI:3052471"/>
    </source>
</evidence>
<sequence length="622" mass="67336">MVPVENTEGPNLLNQKGREAETEGSCGASGGGHPACAGGPSMFTFLTSVTAAISGLLVGYELGLISGALLQIRTLLALTCHEQEMVVSSLLIGAFLASLTGGVLIDRYGRRLAIILSSCLLGLGSLVLIMSLSYTLLIMGRVAIGVSISLSSIATCVYIAEIAPQHRRGLLVSLNELMIVTGILFAYISNYAFANISNGWKYMFGLVIPLGVLQAIAMYFLPPSPRFLVMKGQEESAGKVLRKLRVISDTTEELTLIKSSLKDEYQYSFWDLFRSKDNMRTRILIGLTLVFFVQTTGQPNILFYASTVLKSVGFQSNEAASLASTGVGVVKVVSTIPATLLVDHIGSKTFLCIGSSVMSASLLTMGIVNLNINMNFTNICRSHSLLNQSLEEFVFYATGNLSISNSSLREHFKRITPYSKGSFMPMGNGMEPKGEMTFTSSLPNAGLSRTEHQGVTDTAVVPAAYKWLSLASLLVYVAAFSIGLGPMPWLVLSEIFPGGIRGRAMALTSSMNWGVNLLISLTFLTVTDLIGLSWVCFIYTIMSLASLAFVVLFIPETKGCSLEQISVELAKANYVKNNICFMSHHQEELVPTQLQKRKPQEQLPECNHLCGRGQSQRPSPDT</sequence>
<protein>
    <recommendedName>
        <fullName evidence="9">Solute carrier family 2, facilitated glucose transporter member 12</fullName>
    </recommendedName>
    <alternativeName>
        <fullName evidence="8">Glucose transporter type 12</fullName>
        <shortName evidence="8">GLUT-12</shortName>
    </alternativeName>
</protein>
<proteinExistence type="evidence at transcript level"/>
<dbReference type="EMBL" id="AJ549317">
    <property type="protein sequence ID" value="CAD70577.1"/>
    <property type="molecule type" value="mRNA"/>
</dbReference>
<dbReference type="EMBL" id="AY230881">
    <property type="protein sequence ID" value="AAP45844.1"/>
    <property type="molecule type" value="mRNA"/>
</dbReference>
<dbReference type="EMBL" id="AK028970">
    <property type="protein sequence ID" value="BAC26220.1"/>
    <property type="molecule type" value="mRNA"/>
</dbReference>
<dbReference type="EMBL" id="AK031659">
    <property type="protein sequence ID" value="BAC27497.1"/>
    <property type="molecule type" value="mRNA"/>
</dbReference>
<dbReference type="EMBL" id="AK035972">
    <property type="protein sequence ID" value="BAC29262.1"/>
    <property type="molecule type" value="mRNA"/>
</dbReference>
<dbReference type="EMBL" id="AK143263">
    <property type="protein sequence ID" value="BAE25329.1"/>
    <property type="molecule type" value="mRNA"/>
</dbReference>
<dbReference type="EMBL" id="BC096454">
    <property type="protein sequence ID" value="AAH96454.1"/>
    <property type="molecule type" value="mRNA"/>
</dbReference>
<dbReference type="EMBL" id="BC116314">
    <property type="protein sequence ID" value="AAI16315.1"/>
    <property type="molecule type" value="mRNA"/>
</dbReference>
<dbReference type="EMBL" id="BC116315">
    <property type="protein sequence ID" value="AAI16316.1"/>
    <property type="molecule type" value="mRNA"/>
</dbReference>
<dbReference type="CCDS" id="CCDS23729.1"/>
<dbReference type="RefSeq" id="NP_849265.2">
    <property type="nucleotide sequence ID" value="NM_178934.4"/>
</dbReference>
<dbReference type="SMR" id="Q8BFW9"/>
<dbReference type="FunCoup" id="Q8BFW9">
    <property type="interactions" value="54"/>
</dbReference>
<dbReference type="STRING" id="10090.ENSMUSP00000043962"/>
<dbReference type="GlyCosmos" id="Q8BFW9">
    <property type="glycosylation" value="5 sites, No reported glycans"/>
</dbReference>
<dbReference type="GlyGen" id="Q8BFW9">
    <property type="glycosylation" value="5 sites"/>
</dbReference>
<dbReference type="PhosphoSitePlus" id="Q8BFW9"/>
<dbReference type="PaxDb" id="10090-ENSMUSP00000043962"/>
<dbReference type="ProteomicsDB" id="271347"/>
<dbReference type="Antibodypedia" id="32959">
    <property type="antibodies" value="124 antibodies from 24 providers"/>
</dbReference>
<dbReference type="DNASU" id="353169"/>
<dbReference type="Ensembl" id="ENSMUST00000042261.5">
    <property type="protein sequence ID" value="ENSMUSP00000043962.5"/>
    <property type="gene ID" value="ENSMUSG00000037490.6"/>
</dbReference>
<dbReference type="GeneID" id="353169"/>
<dbReference type="KEGG" id="mmu:353169"/>
<dbReference type="UCSC" id="uc007epo.2">
    <property type="organism name" value="mouse"/>
</dbReference>
<dbReference type="AGR" id="MGI:3052471"/>
<dbReference type="CTD" id="154091"/>
<dbReference type="MGI" id="MGI:3052471">
    <property type="gene designation" value="Slc2a12"/>
</dbReference>
<dbReference type="VEuPathDB" id="HostDB:ENSMUSG00000037490"/>
<dbReference type="eggNOG" id="KOG0254">
    <property type="taxonomic scope" value="Eukaryota"/>
</dbReference>
<dbReference type="GeneTree" id="ENSGT00940000159614"/>
<dbReference type="HOGENOM" id="CLU_001265_30_5_1"/>
<dbReference type="InParanoid" id="Q8BFW9"/>
<dbReference type="OMA" id="TGSHMES"/>
<dbReference type="OrthoDB" id="4142200at2759"/>
<dbReference type="PhylomeDB" id="Q8BFW9"/>
<dbReference type="TreeFam" id="TF332408"/>
<dbReference type="Reactome" id="R-MMU-189200">
    <property type="pathway name" value="Cellular hexose transport"/>
</dbReference>
<dbReference type="BioGRID-ORCS" id="353169">
    <property type="hits" value="3 hits in 78 CRISPR screens"/>
</dbReference>
<dbReference type="ChiTaRS" id="Slc2a12">
    <property type="organism name" value="mouse"/>
</dbReference>
<dbReference type="PRO" id="PR:Q8BFW9"/>
<dbReference type="Proteomes" id="UP000000589">
    <property type="component" value="Chromosome 10"/>
</dbReference>
<dbReference type="RNAct" id="Q8BFW9">
    <property type="molecule type" value="protein"/>
</dbReference>
<dbReference type="Bgee" id="ENSMUSG00000037490">
    <property type="expression patterns" value="Expressed in choroid plexus epithelium and 168 other cell types or tissues"/>
</dbReference>
<dbReference type="ExpressionAtlas" id="Q8BFW9">
    <property type="expression patterns" value="baseline and differential"/>
</dbReference>
<dbReference type="GO" id="GO:0012505">
    <property type="term" value="C:endomembrane system"/>
    <property type="evidence" value="ECO:0007669"/>
    <property type="project" value="UniProtKB-SubCell"/>
</dbReference>
<dbReference type="GO" id="GO:0016020">
    <property type="term" value="C:membrane"/>
    <property type="evidence" value="ECO:0000314"/>
    <property type="project" value="MGI"/>
</dbReference>
<dbReference type="GO" id="GO:0048471">
    <property type="term" value="C:perinuclear region of cytoplasm"/>
    <property type="evidence" value="ECO:0007669"/>
    <property type="project" value="UniProtKB-SubCell"/>
</dbReference>
<dbReference type="GO" id="GO:0005886">
    <property type="term" value="C:plasma membrane"/>
    <property type="evidence" value="ECO:0007669"/>
    <property type="project" value="UniProtKB-SubCell"/>
</dbReference>
<dbReference type="GO" id="GO:0022857">
    <property type="term" value="F:transmembrane transporter activity"/>
    <property type="evidence" value="ECO:0007669"/>
    <property type="project" value="InterPro"/>
</dbReference>
<dbReference type="GO" id="GO:1904659">
    <property type="term" value="P:D-glucose transmembrane transport"/>
    <property type="evidence" value="ECO:0000314"/>
    <property type="project" value="MGI"/>
</dbReference>
<dbReference type="CDD" id="cd17435">
    <property type="entry name" value="MFS_GLUT12_Class3"/>
    <property type="match status" value="1"/>
</dbReference>
<dbReference type="FunFam" id="1.20.1250.20:FF:000237">
    <property type="entry name" value="Solute carrier family 2 (Facilitated glucose transporter), member 12"/>
    <property type="match status" value="1"/>
</dbReference>
<dbReference type="FunFam" id="1.20.1250.20:FF:000124">
    <property type="entry name" value="Solute carrier family 2, facilitated glucose transporter member 12"/>
    <property type="match status" value="1"/>
</dbReference>
<dbReference type="Gene3D" id="1.20.1250.20">
    <property type="entry name" value="MFS general substrate transporter like domains"/>
    <property type="match status" value="2"/>
</dbReference>
<dbReference type="InterPro" id="IPR020846">
    <property type="entry name" value="MFS_dom"/>
</dbReference>
<dbReference type="InterPro" id="IPR005828">
    <property type="entry name" value="MFS_sugar_transport-like"/>
</dbReference>
<dbReference type="InterPro" id="IPR050820">
    <property type="entry name" value="MFS_Sugar_Transporter"/>
</dbReference>
<dbReference type="InterPro" id="IPR036259">
    <property type="entry name" value="MFS_trans_sf"/>
</dbReference>
<dbReference type="InterPro" id="IPR003663">
    <property type="entry name" value="Sugar/inositol_transpt"/>
</dbReference>
<dbReference type="InterPro" id="IPR005829">
    <property type="entry name" value="Sugar_transporter_CS"/>
</dbReference>
<dbReference type="NCBIfam" id="TIGR00879">
    <property type="entry name" value="SP"/>
    <property type="match status" value="1"/>
</dbReference>
<dbReference type="PANTHER" id="PTHR48023">
    <property type="entry name" value="D-XYLOSE-PROTON SYMPORTER-LIKE 2"/>
    <property type="match status" value="1"/>
</dbReference>
<dbReference type="PANTHER" id="PTHR48023:SF2">
    <property type="entry name" value="SOLUTE CARRIER FAMILY 2, FACILITATED GLUCOSE TRANSPORTER MEMBER 12"/>
    <property type="match status" value="1"/>
</dbReference>
<dbReference type="Pfam" id="PF00083">
    <property type="entry name" value="Sugar_tr"/>
    <property type="match status" value="2"/>
</dbReference>
<dbReference type="PRINTS" id="PR00171">
    <property type="entry name" value="SUGRTRNSPORT"/>
</dbReference>
<dbReference type="SUPFAM" id="SSF103473">
    <property type="entry name" value="MFS general substrate transporter"/>
    <property type="match status" value="1"/>
</dbReference>
<dbReference type="PROSITE" id="PS50850">
    <property type="entry name" value="MFS"/>
    <property type="match status" value="1"/>
</dbReference>
<dbReference type="PROSITE" id="PS00216">
    <property type="entry name" value="SUGAR_TRANSPORT_1"/>
    <property type="match status" value="1"/>
</dbReference>
<comment type="function">
    <text evidence="7">Insulin-independent facilitative glucose transporter.</text>
</comment>
<comment type="catalytic activity">
    <reaction evidence="10">
        <text>D-glucose(out) = D-glucose(in)</text>
        <dbReference type="Rhea" id="RHEA:60376"/>
        <dbReference type="ChEBI" id="CHEBI:4167"/>
    </reaction>
</comment>
<comment type="subcellular location">
    <subcellularLocation>
        <location evidence="7">Cell membrane</location>
        <topology evidence="3">Multi-pass membrane protein</topology>
    </subcellularLocation>
    <subcellularLocation>
        <location evidence="1">Endomembrane system</location>
        <topology evidence="3">Multi-pass membrane protein</topology>
    </subcellularLocation>
    <subcellularLocation>
        <location evidence="2">Cytoplasm</location>
        <location evidence="2">Perinuclear region</location>
    </subcellularLocation>
    <text evidence="2">Localizes primarily perinuclear region in the absence of insulin.</text>
</comment>
<comment type="tissue specificity">
    <text evidence="5">Expressed in skeletal muscle, heart, brain, kidney, spleen, adipose tissues and to a lesser extent in small intestine and lung.</text>
</comment>
<comment type="developmental stage">
    <text evidence="6">Expression is clearly detected in ovulated oocytes and 2-cells embryos but decline day 3 morulae. Remains at very low levels between 2 dpc and 11 dpc.</text>
</comment>
<comment type="similarity">
    <text evidence="9">Belongs to the major facilitator superfamily. Sugar transporter (TC 2.A.1.1) family. Glucose transporter subfamily.</text>
</comment>
<gene>
    <name evidence="11" type="primary">Slc2a12</name>
    <name evidence="8" type="synonym">Glut12</name>
</gene>
<accession>Q8BFW9</accession>
<accession>Q14B60</accession>
<accession>Q3UPR6</accession>
<accession>Q8BZB7</accession>
<reference key="1">
    <citation type="journal article" date="2003" name="Biochem. Biophys. Res. Commun.">
        <title>Expression of class III facilitative glucose transporter genes (GLUT-10 and GLUT-12) in mouse and human adipose tissues.</title>
        <authorList>
            <person name="Wood I.S."/>
            <person name="Hunter L."/>
            <person name="Trayhurn P."/>
        </authorList>
    </citation>
    <scope>NUCLEOTIDE SEQUENCE [MRNA]</scope>
    <scope>TISSUE SPECIFICITY</scope>
    <source>
        <strain>CD-1</strain>
        <tissue>White adipose tissue</tissue>
    </source>
</reference>
<reference key="2">
    <citation type="journal article" date="2004" name="Gene Expr. Patterns">
        <title>Identification of the facilitative glucose transporter 12 gene Glut12 in mouse preimplantation embryos.</title>
        <authorList>
            <person name="Zhou Y."/>
            <person name="Kaye P.L."/>
            <person name="Pantaleon M."/>
        </authorList>
    </citation>
    <scope>NUCLEOTIDE SEQUENCE [MRNA]</scope>
    <scope>DEVELOPMENTAL STAGE</scope>
</reference>
<reference key="3">
    <citation type="journal article" date="2005" name="Science">
        <title>The transcriptional landscape of the mammalian genome.</title>
        <authorList>
            <person name="Carninci P."/>
            <person name="Kasukawa T."/>
            <person name="Katayama S."/>
            <person name="Gough J."/>
            <person name="Frith M.C."/>
            <person name="Maeda N."/>
            <person name="Oyama R."/>
            <person name="Ravasi T."/>
            <person name="Lenhard B."/>
            <person name="Wells C."/>
            <person name="Kodzius R."/>
            <person name="Shimokawa K."/>
            <person name="Bajic V.B."/>
            <person name="Brenner S.E."/>
            <person name="Batalov S."/>
            <person name="Forrest A.R."/>
            <person name="Zavolan M."/>
            <person name="Davis M.J."/>
            <person name="Wilming L.G."/>
            <person name="Aidinis V."/>
            <person name="Allen J.E."/>
            <person name="Ambesi-Impiombato A."/>
            <person name="Apweiler R."/>
            <person name="Aturaliya R.N."/>
            <person name="Bailey T.L."/>
            <person name="Bansal M."/>
            <person name="Baxter L."/>
            <person name="Beisel K.W."/>
            <person name="Bersano T."/>
            <person name="Bono H."/>
            <person name="Chalk A.M."/>
            <person name="Chiu K.P."/>
            <person name="Choudhary V."/>
            <person name="Christoffels A."/>
            <person name="Clutterbuck D.R."/>
            <person name="Crowe M.L."/>
            <person name="Dalla E."/>
            <person name="Dalrymple B.P."/>
            <person name="de Bono B."/>
            <person name="Della Gatta G."/>
            <person name="di Bernardo D."/>
            <person name="Down T."/>
            <person name="Engstrom P."/>
            <person name="Fagiolini M."/>
            <person name="Faulkner G."/>
            <person name="Fletcher C.F."/>
            <person name="Fukushima T."/>
            <person name="Furuno M."/>
            <person name="Futaki S."/>
            <person name="Gariboldi M."/>
            <person name="Georgii-Hemming P."/>
            <person name="Gingeras T.R."/>
            <person name="Gojobori T."/>
            <person name="Green R.E."/>
            <person name="Gustincich S."/>
            <person name="Harbers M."/>
            <person name="Hayashi Y."/>
            <person name="Hensch T.K."/>
            <person name="Hirokawa N."/>
            <person name="Hill D."/>
            <person name="Huminiecki L."/>
            <person name="Iacono M."/>
            <person name="Ikeo K."/>
            <person name="Iwama A."/>
            <person name="Ishikawa T."/>
            <person name="Jakt M."/>
            <person name="Kanapin A."/>
            <person name="Katoh M."/>
            <person name="Kawasawa Y."/>
            <person name="Kelso J."/>
            <person name="Kitamura H."/>
            <person name="Kitano H."/>
            <person name="Kollias G."/>
            <person name="Krishnan S.P."/>
            <person name="Kruger A."/>
            <person name="Kummerfeld S.K."/>
            <person name="Kurochkin I.V."/>
            <person name="Lareau L.F."/>
            <person name="Lazarevic D."/>
            <person name="Lipovich L."/>
            <person name="Liu J."/>
            <person name="Liuni S."/>
            <person name="McWilliam S."/>
            <person name="Madan Babu M."/>
            <person name="Madera M."/>
            <person name="Marchionni L."/>
            <person name="Matsuda H."/>
            <person name="Matsuzawa S."/>
            <person name="Miki H."/>
            <person name="Mignone F."/>
            <person name="Miyake S."/>
            <person name="Morris K."/>
            <person name="Mottagui-Tabar S."/>
            <person name="Mulder N."/>
            <person name="Nakano N."/>
            <person name="Nakauchi H."/>
            <person name="Ng P."/>
            <person name="Nilsson R."/>
            <person name="Nishiguchi S."/>
            <person name="Nishikawa S."/>
            <person name="Nori F."/>
            <person name="Ohara O."/>
            <person name="Okazaki Y."/>
            <person name="Orlando V."/>
            <person name="Pang K.C."/>
            <person name="Pavan W.J."/>
            <person name="Pavesi G."/>
            <person name="Pesole G."/>
            <person name="Petrovsky N."/>
            <person name="Piazza S."/>
            <person name="Reed J."/>
            <person name="Reid J.F."/>
            <person name="Ring B.Z."/>
            <person name="Ringwald M."/>
            <person name="Rost B."/>
            <person name="Ruan Y."/>
            <person name="Salzberg S.L."/>
            <person name="Sandelin A."/>
            <person name="Schneider C."/>
            <person name="Schoenbach C."/>
            <person name="Sekiguchi K."/>
            <person name="Semple C.A."/>
            <person name="Seno S."/>
            <person name="Sessa L."/>
            <person name="Sheng Y."/>
            <person name="Shibata Y."/>
            <person name="Shimada H."/>
            <person name="Shimada K."/>
            <person name="Silva D."/>
            <person name="Sinclair B."/>
            <person name="Sperling S."/>
            <person name="Stupka E."/>
            <person name="Sugiura K."/>
            <person name="Sultana R."/>
            <person name="Takenaka Y."/>
            <person name="Taki K."/>
            <person name="Tammoja K."/>
            <person name="Tan S.L."/>
            <person name="Tang S."/>
            <person name="Taylor M.S."/>
            <person name="Tegner J."/>
            <person name="Teichmann S.A."/>
            <person name="Ueda H.R."/>
            <person name="van Nimwegen E."/>
            <person name="Verardo R."/>
            <person name="Wei C.L."/>
            <person name="Yagi K."/>
            <person name="Yamanishi H."/>
            <person name="Zabarovsky E."/>
            <person name="Zhu S."/>
            <person name="Zimmer A."/>
            <person name="Hide W."/>
            <person name="Bult C."/>
            <person name="Grimmond S.M."/>
            <person name="Teasdale R.D."/>
            <person name="Liu E.T."/>
            <person name="Brusic V."/>
            <person name="Quackenbush J."/>
            <person name="Wahlestedt C."/>
            <person name="Mattick J.S."/>
            <person name="Hume D.A."/>
            <person name="Kai C."/>
            <person name="Sasaki D."/>
            <person name="Tomaru Y."/>
            <person name="Fukuda S."/>
            <person name="Kanamori-Katayama M."/>
            <person name="Suzuki M."/>
            <person name="Aoki J."/>
            <person name="Arakawa T."/>
            <person name="Iida J."/>
            <person name="Imamura K."/>
            <person name="Itoh M."/>
            <person name="Kato T."/>
            <person name="Kawaji H."/>
            <person name="Kawagashira N."/>
            <person name="Kawashima T."/>
            <person name="Kojima M."/>
            <person name="Kondo S."/>
            <person name="Konno H."/>
            <person name="Nakano K."/>
            <person name="Ninomiya N."/>
            <person name="Nishio T."/>
            <person name="Okada M."/>
            <person name="Plessy C."/>
            <person name="Shibata K."/>
            <person name="Shiraki T."/>
            <person name="Suzuki S."/>
            <person name="Tagami M."/>
            <person name="Waki K."/>
            <person name="Watahiki A."/>
            <person name="Okamura-Oho Y."/>
            <person name="Suzuki H."/>
            <person name="Kawai J."/>
            <person name="Hayashizaki Y."/>
        </authorList>
    </citation>
    <scope>NUCLEOTIDE SEQUENCE [LARGE SCALE MRNA]</scope>
    <source>
        <strain>C57BL/6J</strain>
        <tissue>Cerebellum</tissue>
        <tissue>Oviduct</tissue>
        <tissue>Skin</tissue>
        <tissue>Testis</tissue>
    </source>
</reference>
<reference key="4">
    <citation type="journal article" date="2004" name="Genome Res.">
        <title>The status, quality, and expansion of the NIH full-length cDNA project: the Mammalian Gene Collection (MGC).</title>
        <authorList>
            <consortium name="The MGC Project Team"/>
        </authorList>
    </citation>
    <scope>NUCLEOTIDE SEQUENCE [LARGE SCALE MRNA]</scope>
    <source>
        <strain>FVB/N</strain>
        <tissue>Kidney</tissue>
    </source>
</reference>
<reference key="5">
    <citation type="journal article" date="2013" name="Biochim. Biophys. Acta">
        <title>GLUT12 functions as a basal and insulin-independent glucose transporter in the heart.</title>
        <authorList>
            <person name="Waller A.P."/>
            <person name="George M."/>
            <person name="Kalyanasundaram A."/>
            <person name="Kang C."/>
            <person name="Periasamy M."/>
            <person name="Hu K."/>
            <person name="Lacombe V.A."/>
        </authorList>
    </citation>
    <scope>FUNCTION</scope>
    <scope>TRANSPORTER ACTIVITY</scope>
    <scope>SUBCELLULAR LOCATION</scope>
</reference>
<feature type="chain" id="PRO_0000292016" description="Solute carrier family 2, facilitated glucose transporter member 12">
    <location>
        <begin position="1"/>
        <end position="622"/>
    </location>
</feature>
<feature type="topological domain" description="Cytoplasmic" evidence="3">
    <location>
        <begin position="1"/>
        <end position="44"/>
    </location>
</feature>
<feature type="transmembrane region" description="Helical" evidence="3">
    <location>
        <begin position="45"/>
        <end position="65"/>
    </location>
</feature>
<feature type="topological domain" description="Extracellular" evidence="3">
    <location>
        <begin position="66"/>
        <end position="84"/>
    </location>
</feature>
<feature type="transmembrane region" description="Helical" evidence="3">
    <location>
        <begin position="85"/>
        <end position="105"/>
    </location>
</feature>
<feature type="topological domain" description="Cytoplasmic" evidence="3">
    <location>
        <begin position="106"/>
        <end position="111"/>
    </location>
</feature>
<feature type="transmembrane region" description="Helical" evidence="3">
    <location>
        <begin position="112"/>
        <end position="132"/>
    </location>
</feature>
<feature type="topological domain" description="Extracellular" evidence="3">
    <location>
        <begin position="133"/>
        <end position="141"/>
    </location>
</feature>
<feature type="transmembrane region" description="Helical" evidence="3">
    <location>
        <begin position="142"/>
        <end position="162"/>
    </location>
</feature>
<feature type="topological domain" description="Cytoplasmic" evidence="3">
    <location>
        <begin position="163"/>
        <end position="168"/>
    </location>
</feature>
<feature type="transmembrane region" description="Helical" evidence="3">
    <location>
        <begin position="169"/>
        <end position="189"/>
    </location>
</feature>
<feature type="topological domain" description="Extracellular" evidence="3">
    <location>
        <begin position="190"/>
        <end position="201"/>
    </location>
</feature>
<feature type="transmembrane region" description="Helical" evidence="3">
    <location>
        <begin position="202"/>
        <end position="222"/>
    </location>
</feature>
<feature type="topological domain" description="Cytoplasmic" evidence="3">
    <location>
        <begin position="223"/>
        <end position="282"/>
    </location>
</feature>
<feature type="transmembrane region" description="Helical" evidence="3">
    <location>
        <begin position="283"/>
        <end position="303"/>
    </location>
</feature>
<feature type="topological domain" description="Extracellular" evidence="3">
    <location>
        <begin position="304"/>
        <end position="321"/>
    </location>
</feature>
<feature type="transmembrane region" description="Helical" evidence="3">
    <location>
        <begin position="322"/>
        <end position="342"/>
    </location>
</feature>
<feature type="topological domain" description="Cytoplasmic" evidence="3">
    <location>
        <begin position="343"/>
        <end position="349"/>
    </location>
</feature>
<feature type="transmembrane region" description="Helical" evidence="3">
    <location>
        <begin position="350"/>
        <end position="370"/>
    </location>
</feature>
<feature type="topological domain" description="Extracellular" evidence="3">
    <location>
        <begin position="371"/>
        <end position="471"/>
    </location>
</feature>
<feature type="transmembrane region" description="Helical" evidence="3">
    <location>
        <begin position="472"/>
        <end position="492"/>
    </location>
</feature>
<feature type="topological domain" description="Cytoplasmic" evidence="3">
    <location>
        <begin position="493"/>
        <end position="503"/>
    </location>
</feature>
<feature type="transmembrane region" description="Helical" evidence="3">
    <location>
        <begin position="504"/>
        <end position="524"/>
    </location>
</feature>
<feature type="topological domain" description="Extracellular" evidence="3">
    <location>
        <begin position="525"/>
        <end position="533"/>
    </location>
</feature>
<feature type="transmembrane region" description="Helical" evidence="3">
    <location>
        <begin position="534"/>
        <end position="554"/>
    </location>
</feature>
<feature type="topological domain" description="Cytoplasmic" evidence="3">
    <location>
        <begin position="555"/>
        <end position="622"/>
    </location>
</feature>
<feature type="region of interest" description="Disordered" evidence="4">
    <location>
        <begin position="1"/>
        <end position="26"/>
    </location>
</feature>
<feature type="glycosylation site" description="N-linked (GlcNAc...) asparagine" evidence="3">
    <location>
        <position position="195"/>
    </location>
</feature>
<feature type="glycosylation site" description="N-linked (GlcNAc...) asparagine" evidence="3">
    <location>
        <position position="375"/>
    </location>
</feature>
<feature type="glycosylation site" description="N-linked (GlcNAc...) asparagine" evidence="3">
    <location>
        <position position="387"/>
    </location>
</feature>
<feature type="glycosylation site" description="N-linked (GlcNAc...) asparagine" evidence="3">
    <location>
        <position position="400"/>
    </location>
</feature>
<feature type="glycosylation site" description="N-linked (GlcNAc...) asparagine" evidence="3">
    <location>
        <position position="405"/>
    </location>
</feature>
<feature type="sequence conflict" description="In Ref. 3; BAE25329." evidence="9" ref="3">
    <original>I</original>
    <variation>L</variation>
    <location>
        <position position="159"/>
    </location>
</feature>
<feature type="sequence conflict" description="In Ref. 4; AAI16316." evidence="9" ref="4">
    <original>A</original>
    <variation>S</variation>
    <location>
        <position position="160"/>
    </location>
</feature>
<feature type="sequence conflict" description="In Ref. 3; BAC29262." evidence="9" ref="3">
    <original>V</original>
    <variation>I</variation>
    <location>
        <position position="290"/>
    </location>
</feature>